<proteinExistence type="inferred from homology"/>
<dbReference type="EMBL" id="CP000507">
    <property type="protein sequence ID" value="ABL98439.1"/>
    <property type="molecule type" value="Genomic_DNA"/>
</dbReference>
<dbReference type="RefSeq" id="WP_011758349.1">
    <property type="nucleotide sequence ID" value="NC_008700.1"/>
</dbReference>
<dbReference type="SMR" id="A1S233"/>
<dbReference type="STRING" id="326297.Sama_0228"/>
<dbReference type="KEGG" id="saz:Sama_0228"/>
<dbReference type="eggNOG" id="COG0097">
    <property type="taxonomic scope" value="Bacteria"/>
</dbReference>
<dbReference type="HOGENOM" id="CLU_065464_1_2_6"/>
<dbReference type="OrthoDB" id="9805007at2"/>
<dbReference type="Proteomes" id="UP000009175">
    <property type="component" value="Chromosome"/>
</dbReference>
<dbReference type="GO" id="GO:0022625">
    <property type="term" value="C:cytosolic large ribosomal subunit"/>
    <property type="evidence" value="ECO:0007669"/>
    <property type="project" value="TreeGrafter"/>
</dbReference>
<dbReference type="GO" id="GO:0019843">
    <property type="term" value="F:rRNA binding"/>
    <property type="evidence" value="ECO:0007669"/>
    <property type="project" value="UniProtKB-UniRule"/>
</dbReference>
<dbReference type="GO" id="GO:0003735">
    <property type="term" value="F:structural constituent of ribosome"/>
    <property type="evidence" value="ECO:0007669"/>
    <property type="project" value="InterPro"/>
</dbReference>
<dbReference type="GO" id="GO:0002181">
    <property type="term" value="P:cytoplasmic translation"/>
    <property type="evidence" value="ECO:0007669"/>
    <property type="project" value="TreeGrafter"/>
</dbReference>
<dbReference type="FunFam" id="3.90.930.12:FF:000001">
    <property type="entry name" value="50S ribosomal protein L6"/>
    <property type="match status" value="1"/>
</dbReference>
<dbReference type="FunFam" id="3.90.930.12:FF:000002">
    <property type="entry name" value="50S ribosomal protein L6"/>
    <property type="match status" value="1"/>
</dbReference>
<dbReference type="Gene3D" id="3.90.930.12">
    <property type="entry name" value="Ribosomal protein L6, alpha-beta domain"/>
    <property type="match status" value="2"/>
</dbReference>
<dbReference type="HAMAP" id="MF_01365_B">
    <property type="entry name" value="Ribosomal_uL6_B"/>
    <property type="match status" value="1"/>
</dbReference>
<dbReference type="InterPro" id="IPR000702">
    <property type="entry name" value="Ribosomal_uL6-like"/>
</dbReference>
<dbReference type="InterPro" id="IPR036789">
    <property type="entry name" value="Ribosomal_uL6-like_a/b-dom_sf"/>
</dbReference>
<dbReference type="InterPro" id="IPR020040">
    <property type="entry name" value="Ribosomal_uL6_a/b-dom"/>
</dbReference>
<dbReference type="InterPro" id="IPR019906">
    <property type="entry name" value="Ribosomal_uL6_bac-type"/>
</dbReference>
<dbReference type="InterPro" id="IPR002358">
    <property type="entry name" value="Ribosomal_uL6_CS"/>
</dbReference>
<dbReference type="NCBIfam" id="TIGR03654">
    <property type="entry name" value="L6_bact"/>
    <property type="match status" value="1"/>
</dbReference>
<dbReference type="PANTHER" id="PTHR11655">
    <property type="entry name" value="60S/50S RIBOSOMAL PROTEIN L6/L9"/>
    <property type="match status" value="1"/>
</dbReference>
<dbReference type="PANTHER" id="PTHR11655:SF14">
    <property type="entry name" value="LARGE RIBOSOMAL SUBUNIT PROTEIN UL6M"/>
    <property type="match status" value="1"/>
</dbReference>
<dbReference type="Pfam" id="PF00347">
    <property type="entry name" value="Ribosomal_L6"/>
    <property type="match status" value="2"/>
</dbReference>
<dbReference type="PIRSF" id="PIRSF002162">
    <property type="entry name" value="Ribosomal_L6"/>
    <property type="match status" value="1"/>
</dbReference>
<dbReference type="PRINTS" id="PR00059">
    <property type="entry name" value="RIBOSOMALL6"/>
</dbReference>
<dbReference type="SUPFAM" id="SSF56053">
    <property type="entry name" value="Ribosomal protein L6"/>
    <property type="match status" value="2"/>
</dbReference>
<dbReference type="PROSITE" id="PS00525">
    <property type="entry name" value="RIBOSOMAL_L6_1"/>
    <property type="match status" value="1"/>
</dbReference>
<evidence type="ECO:0000255" key="1">
    <source>
        <dbReference type="HAMAP-Rule" id="MF_01365"/>
    </source>
</evidence>
<evidence type="ECO:0000305" key="2"/>
<feature type="chain" id="PRO_1000055302" description="Large ribosomal subunit protein uL6">
    <location>
        <begin position="1"/>
        <end position="177"/>
    </location>
</feature>
<name>RL6_SHEAM</name>
<comment type="function">
    <text evidence="1">This protein binds to the 23S rRNA, and is important in its secondary structure. It is located near the subunit interface in the base of the L7/L12 stalk, and near the tRNA binding site of the peptidyltransferase center.</text>
</comment>
<comment type="subunit">
    <text evidence="1">Part of the 50S ribosomal subunit.</text>
</comment>
<comment type="similarity">
    <text evidence="1">Belongs to the universal ribosomal protein uL6 family.</text>
</comment>
<sequence length="177" mass="18715">MSRVAKAPVSIPAGVEVTLNGQEITVKGGKGTLTRVINSAVAVTVEDGAIKFAPVEGVVNAWAQAGTARALINNMVVGVSQGFEKKLQLVGVGYRAKVAGSDVDLSLGFSHPLVHKLPAGVTAECPSQTEIVLRSIDKELVGQVAAEIRGYRPPEPYKGKGVRYANEEVRRKEAKKK</sequence>
<organism>
    <name type="scientific">Shewanella amazonensis (strain ATCC BAA-1098 / SB2B)</name>
    <dbReference type="NCBI Taxonomy" id="326297"/>
    <lineage>
        <taxon>Bacteria</taxon>
        <taxon>Pseudomonadati</taxon>
        <taxon>Pseudomonadota</taxon>
        <taxon>Gammaproteobacteria</taxon>
        <taxon>Alteromonadales</taxon>
        <taxon>Shewanellaceae</taxon>
        <taxon>Shewanella</taxon>
    </lineage>
</organism>
<gene>
    <name evidence="1" type="primary">rplF</name>
    <name type="ordered locus">Sama_0228</name>
</gene>
<reference key="1">
    <citation type="submission" date="2006-12" db="EMBL/GenBank/DDBJ databases">
        <title>Complete sequence of Shewanella amazonensis SB2B.</title>
        <authorList>
            <consortium name="US DOE Joint Genome Institute"/>
            <person name="Copeland A."/>
            <person name="Lucas S."/>
            <person name="Lapidus A."/>
            <person name="Barry K."/>
            <person name="Detter J.C."/>
            <person name="Glavina del Rio T."/>
            <person name="Hammon N."/>
            <person name="Israni S."/>
            <person name="Dalin E."/>
            <person name="Tice H."/>
            <person name="Pitluck S."/>
            <person name="Munk A.C."/>
            <person name="Brettin T."/>
            <person name="Bruce D."/>
            <person name="Han C."/>
            <person name="Tapia R."/>
            <person name="Gilna P."/>
            <person name="Schmutz J."/>
            <person name="Larimer F."/>
            <person name="Land M."/>
            <person name="Hauser L."/>
            <person name="Kyrpides N."/>
            <person name="Mikhailova N."/>
            <person name="Fredrickson J."/>
            <person name="Richardson P."/>
        </authorList>
    </citation>
    <scope>NUCLEOTIDE SEQUENCE [LARGE SCALE GENOMIC DNA]</scope>
    <source>
        <strain>ATCC BAA-1098 / SB2B</strain>
    </source>
</reference>
<protein>
    <recommendedName>
        <fullName evidence="1">Large ribosomal subunit protein uL6</fullName>
    </recommendedName>
    <alternativeName>
        <fullName evidence="2">50S ribosomal protein L6</fullName>
    </alternativeName>
</protein>
<accession>A1S233</accession>
<keyword id="KW-1185">Reference proteome</keyword>
<keyword id="KW-0687">Ribonucleoprotein</keyword>
<keyword id="KW-0689">Ribosomal protein</keyword>
<keyword id="KW-0694">RNA-binding</keyword>
<keyword id="KW-0699">rRNA-binding</keyword>